<gene>
    <name evidence="1" type="primary">rsmH</name>
    <name type="synonym">mraW</name>
    <name type="ordered locus">ECUMN_0082</name>
</gene>
<keyword id="KW-0963">Cytoplasm</keyword>
<keyword id="KW-0489">Methyltransferase</keyword>
<keyword id="KW-0698">rRNA processing</keyword>
<keyword id="KW-0949">S-adenosyl-L-methionine</keyword>
<keyword id="KW-0808">Transferase</keyword>
<sequence length="313" mass="34878">MMENYKHTTVLLDEAVNGLNIRPDGIYIDGTFGRGGHSRLILSQLGEEGRLLAIDRDPQAIAVAKTIDDPRFSIIHGPFSALGEYVAERDLIGKIDGILLDLGVSSPQLDDAERGFSFMRDGPLDMRMDPTRGQSAAEWLQTAEEADIAWVLKTYGEERFAKRIARAIVERNREQPMTRTKELAEVVAAATPVKDKFKHPATRTFQAVRIWVNSELEEIEQALKSSLNVLAPGGRLSIISFHSLEDRIVKRFMRENSRGPQVPAGLPMTEEQLKKLGGRQLRALGKLMPGEEEVAENPRARSSVLRIAERTNA</sequence>
<name>RSMH_ECOLU</name>
<feature type="chain" id="PRO_0000386879" description="Ribosomal RNA small subunit methyltransferase H">
    <location>
        <begin position="1"/>
        <end position="313"/>
    </location>
</feature>
<feature type="binding site" evidence="1">
    <location>
        <begin position="35"/>
        <end position="37"/>
    </location>
    <ligand>
        <name>S-adenosyl-L-methionine</name>
        <dbReference type="ChEBI" id="CHEBI:59789"/>
    </ligand>
</feature>
<feature type="binding site" evidence="1">
    <location>
        <position position="55"/>
    </location>
    <ligand>
        <name>S-adenosyl-L-methionine</name>
        <dbReference type="ChEBI" id="CHEBI:59789"/>
    </ligand>
</feature>
<feature type="binding site" evidence="1">
    <location>
        <position position="79"/>
    </location>
    <ligand>
        <name>S-adenosyl-L-methionine</name>
        <dbReference type="ChEBI" id="CHEBI:59789"/>
    </ligand>
</feature>
<feature type="binding site" evidence="1">
    <location>
        <position position="101"/>
    </location>
    <ligand>
        <name>S-adenosyl-L-methionine</name>
        <dbReference type="ChEBI" id="CHEBI:59789"/>
    </ligand>
</feature>
<feature type="binding site" evidence="1">
    <location>
        <position position="108"/>
    </location>
    <ligand>
        <name>S-adenosyl-L-methionine</name>
        <dbReference type="ChEBI" id="CHEBI:59789"/>
    </ligand>
</feature>
<dbReference type="EC" id="2.1.1.199" evidence="1"/>
<dbReference type="EMBL" id="CU928163">
    <property type="protein sequence ID" value="CAR11305.1"/>
    <property type="molecule type" value="Genomic_DNA"/>
</dbReference>
<dbReference type="RefSeq" id="WP_000970479.1">
    <property type="nucleotide sequence ID" value="NC_011751.1"/>
</dbReference>
<dbReference type="RefSeq" id="YP_002410861.1">
    <property type="nucleotide sequence ID" value="NC_011751.1"/>
</dbReference>
<dbReference type="SMR" id="B7N7V5"/>
<dbReference type="STRING" id="585056.ECUMN_0082"/>
<dbReference type="GeneID" id="86862592"/>
<dbReference type="KEGG" id="eum:ECUMN_0082"/>
<dbReference type="PATRIC" id="fig|585056.7.peg.273"/>
<dbReference type="HOGENOM" id="CLU_038422_2_0_6"/>
<dbReference type="Proteomes" id="UP000007097">
    <property type="component" value="Chromosome"/>
</dbReference>
<dbReference type="GO" id="GO:0005737">
    <property type="term" value="C:cytoplasm"/>
    <property type="evidence" value="ECO:0007669"/>
    <property type="project" value="UniProtKB-SubCell"/>
</dbReference>
<dbReference type="GO" id="GO:0071424">
    <property type="term" value="F:rRNA (cytosine-N4-)-methyltransferase activity"/>
    <property type="evidence" value="ECO:0007669"/>
    <property type="project" value="UniProtKB-UniRule"/>
</dbReference>
<dbReference type="GO" id="GO:0070475">
    <property type="term" value="P:rRNA base methylation"/>
    <property type="evidence" value="ECO:0007669"/>
    <property type="project" value="UniProtKB-UniRule"/>
</dbReference>
<dbReference type="FunFam" id="1.10.150.170:FF:000001">
    <property type="entry name" value="Ribosomal RNA small subunit methyltransferase H"/>
    <property type="match status" value="1"/>
</dbReference>
<dbReference type="Gene3D" id="1.10.150.170">
    <property type="entry name" value="Putative methyltransferase TM0872, insert domain"/>
    <property type="match status" value="1"/>
</dbReference>
<dbReference type="Gene3D" id="3.40.50.150">
    <property type="entry name" value="Vaccinia Virus protein VP39"/>
    <property type="match status" value="1"/>
</dbReference>
<dbReference type="HAMAP" id="MF_01007">
    <property type="entry name" value="16SrRNA_methyltr_H"/>
    <property type="match status" value="1"/>
</dbReference>
<dbReference type="InterPro" id="IPR002903">
    <property type="entry name" value="RsmH"/>
</dbReference>
<dbReference type="InterPro" id="IPR023397">
    <property type="entry name" value="SAM-dep_MeTrfase_MraW_recog"/>
</dbReference>
<dbReference type="InterPro" id="IPR029063">
    <property type="entry name" value="SAM-dependent_MTases_sf"/>
</dbReference>
<dbReference type="NCBIfam" id="TIGR00006">
    <property type="entry name" value="16S rRNA (cytosine(1402)-N(4))-methyltransferase RsmH"/>
    <property type="match status" value="1"/>
</dbReference>
<dbReference type="PANTHER" id="PTHR11265:SF0">
    <property type="entry name" value="12S RRNA N4-METHYLCYTIDINE METHYLTRANSFERASE"/>
    <property type="match status" value="1"/>
</dbReference>
<dbReference type="PANTHER" id="PTHR11265">
    <property type="entry name" value="S-ADENOSYL-METHYLTRANSFERASE MRAW"/>
    <property type="match status" value="1"/>
</dbReference>
<dbReference type="Pfam" id="PF01795">
    <property type="entry name" value="Methyltransf_5"/>
    <property type="match status" value="1"/>
</dbReference>
<dbReference type="PIRSF" id="PIRSF004486">
    <property type="entry name" value="MraW"/>
    <property type="match status" value="1"/>
</dbReference>
<dbReference type="SUPFAM" id="SSF81799">
    <property type="entry name" value="Putative methyltransferase TM0872, insert domain"/>
    <property type="match status" value="1"/>
</dbReference>
<dbReference type="SUPFAM" id="SSF53335">
    <property type="entry name" value="S-adenosyl-L-methionine-dependent methyltransferases"/>
    <property type="match status" value="1"/>
</dbReference>
<protein>
    <recommendedName>
        <fullName evidence="1">Ribosomal RNA small subunit methyltransferase H</fullName>
        <ecNumber evidence="1">2.1.1.199</ecNumber>
    </recommendedName>
    <alternativeName>
        <fullName evidence="1">16S rRNA m(4)C1402 methyltransferase</fullName>
    </alternativeName>
    <alternativeName>
        <fullName evidence="1">rRNA (cytosine-N(4)-)-methyltransferase RsmH</fullName>
    </alternativeName>
</protein>
<proteinExistence type="inferred from homology"/>
<organism>
    <name type="scientific">Escherichia coli O17:K52:H18 (strain UMN026 / ExPEC)</name>
    <dbReference type="NCBI Taxonomy" id="585056"/>
    <lineage>
        <taxon>Bacteria</taxon>
        <taxon>Pseudomonadati</taxon>
        <taxon>Pseudomonadota</taxon>
        <taxon>Gammaproteobacteria</taxon>
        <taxon>Enterobacterales</taxon>
        <taxon>Enterobacteriaceae</taxon>
        <taxon>Escherichia</taxon>
    </lineage>
</organism>
<reference key="1">
    <citation type="journal article" date="2009" name="PLoS Genet.">
        <title>Organised genome dynamics in the Escherichia coli species results in highly diverse adaptive paths.</title>
        <authorList>
            <person name="Touchon M."/>
            <person name="Hoede C."/>
            <person name="Tenaillon O."/>
            <person name="Barbe V."/>
            <person name="Baeriswyl S."/>
            <person name="Bidet P."/>
            <person name="Bingen E."/>
            <person name="Bonacorsi S."/>
            <person name="Bouchier C."/>
            <person name="Bouvet O."/>
            <person name="Calteau A."/>
            <person name="Chiapello H."/>
            <person name="Clermont O."/>
            <person name="Cruveiller S."/>
            <person name="Danchin A."/>
            <person name="Diard M."/>
            <person name="Dossat C."/>
            <person name="Karoui M.E."/>
            <person name="Frapy E."/>
            <person name="Garry L."/>
            <person name="Ghigo J.M."/>
            <person name="Gilles A.M."/>
            <person name="Johnson J."/>
            <person name="Le Bouguenec C."/>
            <person name="Lescat M."/>
            <person name="Mangenot S."/>
            <person name="Martinez-Jehanne V."/>
            <person name="Matic I."/>
            <person name="Nassif X."/>
            <person name="Oztas S."/>
            <person name="Petit M.A."/>
            <person name="Pichon C."/>
            <person name="Rouy Z."/>
            <person name="Ruf C.S."/>
            <person name="Schneider D."/>
            <person name="Tourret J."/>
            <person name="Vacherie B."/>
            <person name="Vallenet D."/>
            <person name="Medigue C."/>
            <person name="Rocha E.P.C."/>
            <person name="Denamur E."/>
        </authorList>
    </citation>
    <scope>NUCLEOTIDE SEQUENCE [LARGE SCALE GENOMIC DNA]</scope>
    <source>
        <strain>UMN026 / ExPEC</strain>
    </source>
</reference>
<comment type="function">
    <text evidence="1">Specifically methylates the N4 position of cytidine in position 1402 (C1402) of 16S rRNA.</text>
</comment>
<comment type="catalytic activity">
    <reaction evidence="1">
        <text>cytidine(1402) in 16S rRNA + S-adenosyl-L-methionine = N(4)-methylcytidine(1402) in 16S rRNA + S-adenosyl-L-homocysteine + H(+)</text>
        <dbReference type="Rhea" id="RHEA:42928"/>
        <dbReference type="Rhea" id="RHEA-COMP:10286"/>
        <dbReference type="Rhea" id="RHEA-COMP:10287"/>
        <dbReference type="ChEBI" id="CHEBI:15378"/>
        <dbReference type="ChEBI" id="CHEBI:57856"/>
        <dbReference type="ChEBI" id="CHEBI:59789"/>
        <dbReference type="ChEBI" id="CHEBI:74506"/>
        <dbReference type="ChEBI" id="CHEBI:82748"/>
        <dbReference type="EC" id="2.1.1.199"/>
    </reaction>
</comment>
<comment type="subcellular location">
    <subcellularLocation>
        <location evidence="1">Cytoplasm</location>
    </subcellularLocation>
</comment>
<comment type="similarity">
    <text evidence="1">Belongs to the methyltransferase superfamily. RsmH family.</text>
</comment>
<accession>B7N7V5</accession>
<evidence type="ECO:0000255" key="1">
    <source>
        <dbReference type="HAMAP-Rule" id="MF_01007"/>
    </source>
</evidence>